<accession>Q6FJZ6</accession>
<name>ATG5_CANGA</name>
<organism>
    <name type="scientific">Candida glabrata (strain ATCC 2001 / BCRC 20586 / JCM 3761 / NBRC 0622 / NRRL Y-65 / CBS 138)</name>
    <name type="common">Yeast</name>
    <name type="synonym">Nakaseomyces glabratus</name>
    <dbReference type="NCBI Taxonomy" id="284593"/>
    <lineage>
        <taxon>Eukaryota</taxon>
        <taxon>Fungi</taxon>
        <taxon>Dikarya</taxon>
        <taxon>Ascomycota</taxon>
        <taxon>Saccharomycotina</taxon>
        <taxon>Saccharomycetes</taxon>
        <taxon>Saccharomycetales</taxon>
        <taxon>Saccharomycetaceae</taxon>
        <taxon>Nakaseomyces</taxon>
    </lineage>
</organism>
<evidence type="ECO:0000250" key="1"/>
<evidence type="ECO:0000305" key="2"/>
<proteinExistence type="inferred from homology"/>
<feature type="chain" id="PRO_0000219001" description="Autophagy protein 5">
    <location>
        <begin position="1"/>
        <end position="270"/>
    </location>
</feature>
<feature type="cross-link" description="Glycyl lysine isopeptide (Lys-Gly) (interchain with G-Cter in ATG12)" evidence="1">
    <location>
        <position position="144"/>
    </location>
</feature>
<gene>
    <name type="primary">ATG5</name>
    <name type="ordered locus">CAGL0M02343g</name>
</gene>
<sequence>MGDSKELVWNGSINVQIKLDSRLLVDGVPEGRRLVNIRVPRESHIAIYTPLVLERLRNVLRSDIEELLPKVWYSYKDISLPWSIPFGTLFDIYNGAHKGISGSRDNYINVWKLNLVTDEKFPINVIPIIEGQDQLRKFMMQSWKQCCFILNGSSKRVMSLSLQDSLEVWEGVTERDYAKYSGVIKRILPRTPRRIPVAIHAANGGPIVQTTEPTLTDTSFSQAVEGIVKADFVVCQGIVMYLRDFSDTSLYDVYDKLHSIDGYLHLIANL</sequence>
<protein>
    <recommendedName>
        <fullName>Autophagy protein 5</fullName>
    </recommendedName>
</protein>
<dbReference type="EMBL" id="CR380959">
    <property type="protein sequence ID" value="CAG62424.1"/>
    <property type="molecule type" value="Genomic_DNA"/>
</dbReference>
<dbReference type="RefSeq" id="XP_449448.1">
    <property type="nucleotide sequence ID" value="XM_449448.1"/>
</dbReference>
<dbReference type="SMR" id="Q6FJZ6"/>
<dbReference type="FunCoup" id="Q6FJZ6">
    <property type="interactions" value="377"/>
</dbReference>
<dbReference type="STRING" id="284593.Q6FJZ6"/>
<dbReference type="EnsemblFungi" id="CAGL0M02343g-T">
    <property type="protein sequence ID" value="CAGL0M02343g-T-p1"/>
    <property type="gene ID" value="CAGL0M02343g"/>
</dbReference>
<dbReference type="KEGG" id="cgr:2891456"/>
<dbReference type="CGD" id="CAL0136227">
    <property type="gene designation" value="CAGL0M02343g"/>
</dbReference>
<dbReference type="VEuPathDB" id="FungiDB:CAGL0M02343g"/>
<dbReference type="eggNOG" id="KOG2976">
    <property type="taxonomic scope" value="Eukaryota"/>
</dbReference>
<dbReference type="HOGENOM" id="CLU_051894_2_0_1"/>
<dbReference type="InParanoid" id="Q6FJZ6"/>
<dbReference type="OMA" id="SIQKAVW"/>
<dbReference type="Proteomes" id="UP000002428">
    <property type="component" value="Chromosome M"/>
</dbReference>
<dbReference type="GO" id="GO:0034274">
    <property type="term" value="C:Atg12-Atg5-Atg16 complex"/>
    <property type="evidence" value="ECO:0007669"/>
    <property type="project" value="EnsemblFungi"/>
</dbReference>
<dbReference type="GO" id="GO:0005776">
    <property type="term" value="C:autophagosome"/>
    <property type="evidence" value="ECO:0007669"/>
    <property type="project" value="EnsemblFungi"/>
</dbReference>
<dbReference type="GO" id="GO:0005829">
    <property type="term" value="C:cytosol"/>
    <property type="evidence" value="ECO:0007669"/>
    <property type="project" value="EnsemblFungi"/>
</dbReference>
<dbReference type="GO" id="GO:0062040">
    <property type="term" value="C:fungal biofilm matrix"/>
    <property type="evidence" value="ECO:0000314"/>
    <property type="project" value="CGD"/>
</dbReference>
<dbReference type="GO" id="GO:0044233">
    <property type="term" value="C:mitochondria-associated endoplasmic reticulum membrane contact site"/>
    <property type="evidence" value="ECO:0007669"/>
    <property type="project" value="TreeGrafter"/>
</dbReference>
<dbReference type="GO" id="GO:0061908">
    <property type="term" value="C:phagophore"/>
    <property type="evidence" value="ECO:0007669"/>
    <property type="project" value="EnsemblFungi"/>
</dbReference>
<dbReference type="GO" id="GO:0034045">
    <property type="term" value="C:phagophore assembly site membrane"/>
    <property type="evidence" value="ECO:0007669"/>
    <property type="project" value="UniProtKB-SubCell"/>
</dbReference>
<dbReference type="GO" id="GO:0120095">
    <property type="term" value="C:vacuole-isolation membrane contact site"/>
    <property type="evidence" value="ECO:0007669"/>
    <property type="project" value="EnsemblFungi"/>
</dbReference>
<dbReference type="GO" id="GO:0019776">
    <property type="term" value="F:Atg8-family ligase activity"/>
    <property type="evidence" value="ECO:0007669"/>
    <property type="project" value="EnsemblFungi"/>
</dbReference>
<dbReference type="GO" id="GO:0140355">
    <property type="term" value="F:cargo receptor ligand activity"/>
    <property type="evidence" value="ECO:0007669"/>
    <property type="project" value="EnsemblFungi"/>
</dbReference>
<dbReference type="GO" id="GO:0008047">
    <property type="term" value="F:enzyme activator activity"/>
    <property type="evidence" value="ECO:0007669"/>
    <property type="project" value="EnsemblFungi"/>
</dbReference>
<dbReference type="GO" id="GO:0006995">
    <property type="term" value="P:cellular response to nitrogen starvation"/>
    <property type="evidence" value="ECO:0007669"/>
    <property type="project" value="TreeGrafter"/>
</dbReference>
<dbReference type="GO" id="GO:0051365">
    <property type="term" value="P:cellular response to potassium ion starvation"/>
    <property type="evidence" value="ECO:0007669"/>
    <property type="project" value="EnsemblFungi"/>
</dbReference>
<dbReference type="GO" id="GO:0032258">
    <property type="term" value="P:cytoplasm to vacuole targeting by the Cvt pathway"/>
    <property type="evidence" value="ECO:0007669"/>
    <property type="project" value="EnsemblFungi"/>
</dbReference>
<dbReference type="GO" id="GO:0000423">
    <property type="term" value="P:mitophagy"/>
    <property type="evidence" value="ECO:0007669"/>
    <property type="project" value="EnsemblFungi"/>
</dbReference>
<dbReference type="GO" id="GO:0034727">
    <property type="term" value="P:piecemeal microautophagy of the nucleus"/>
    <property type="evidence" value="ECO:0007669"/>
    <property type="project" value="EnsemblFungi"/>
</dbReference>
<dbReference type="Gene3D" id="3.10.20.620">
    <property type="match status" value="1"/>
</dbReference>
<dbReference type="Gene3D" id="1.10.246.190">
    <property type="entry name" value="Autophagy protein Apg5, helix rich domain"/>
    <property type="match status" value="1"/>
</dbReference>
<dbReference type="Gene3D" id="3.10.20.90">
    <property type="entry name" value="Phosphatidylinositol 3-kinase Catalytic Subunit, Chain A, domain 1"/>
    <property type="match status" value="1"/>
</dbReference>
<dbReference type="InterPro" id="IPR007239">
    <property type="entry name" value="Atg5"/>
</dbReference>
<dbReference type="InterPro" id="IPR048940">
    <property type="entry name" value="ATG5_HBR"/>
</dbReference>
<dbReference type="InterPro" id="IPR042526">
    <property type="entry name" value="Atg5_HR"/>
</dbReference>
<dbReference type="InterPro" id="IPR048939">
    <property type="entry name" value="ATG5_UblA"/>
</dbReference>
<dbReference type="InterPro" id="IPR042527">
    <property type="entry name" value="Atg5_UblA_dom_sf"/>
</dbReference>
<dbReference type="PANTHER" id="PTHR13040">
    <property type="entry name" value="AUTOPHAGY PROTEIN 5"/>
    <property type="match status" value="1"/>
</dbReference>
<dbReference type="PANTHER" id="PTHR13040:SF2">
    <property type="entry name" value="AUTOPHAGY PROTEIN 5"/>
    <property type="match status" value="1"/>
</dbReference>
<dbReference type="Pfam" id="PF20637">
    <property type="entry name" value="ATG5_HBR"/>
    <property type="match status" value="1"/>
</dbReference>
<dbReference type="Pfam" id="PF20638">
    <property type="entry name" value="ATG5_UblA"/>
    <property type="match status" value="1"/>
</dbReference>
<comment type="function">
    <text evidence="1">Involved in cytoplasm to vacuole transport (Cvt) and autophagic vesicle formation. Autophagy is essential for maintenance of amino acid levels and protein synthesis under nitrogen starvation. Required for selective autophagic degradation of the nucleus (nucleophagy). Also required for mitophagy, which eliminates defective or superfluous mitochondria in order to fulfill cellular energy requirements and prevent excess ROS production. Conjugation with ATG12, through a ubiquitin-like conjugating system involving ATG7 as an E1-like activating enzyme and ATG10 as an E2-like conjugating enzyme, is essential for its function. The ATG12-ATG5 conjugate acts as an E3-like enzyme which is required for lipidation of ATG8 and ATG8 association to the vesicle membranes (By similarity).</text>
</comment>
<comment type="subunit">
    <text evidence="1">Conjugated with ATG12.</text>
</comment>
<comment type="subcellular location">
    <subcellularLocation>
        <location evidence="1">Preautophagosomal structure membrane</location>
        <topology evidence="1">Peripheral membrane protein</topology>
    </subcellularLocation>
</comment>
<comment type="PTM">
    <text evidence="1">Conjugated to ATG12; which is essential for autophagy.</text>
</comment>
<comment type="similarity">
    <text evidence="2">Belongs to the ATG5 family.</text>
</comment>
<keyword id="KW-0072">Autophagy</keyword>
<keyword id="KW-1017">Isopeptide bond</keyword>
<keyword id="KW-0472">Membrane</keyword>
<keyword id="KW-0653">Protein transport</keyword>
<keyword id="KW-1185">Reference proteome</keyword>
<keyword id="KW-0813">Transport</keyword>
<keyword id="KW-0832">Ubl conjugation</keyword>
<reference key="1">
    <citation type="journal article" date="2004" name="Nature">
        <title>Genome evolution in yeasts.</title>
        <authorList>
            <person name="Dujon B."/>
            <person name="Sherman D."/>
            <person name="Fischer G."/>
            <person name="Durrens P."/>
            <person name="Casaregola S."/>
            <person name="Lafontaine I."/>
            <person name="de Montigny J."/>
            <person name="Marck C."/>
            <person name="Neuveglise C."/>
            <person name="Talla E."/>
            <person name="Goffard N."/>
            <person name="Frangeul L."/>
            <person name="Aigle M."/>
            <person name="Anthouard V."/>
            <person name="Babour A."/>
            <person name="Barbe V."/>
            <person name="Barnay S."/>
            <person name="Blanchin S."/>
            <person name="Beckerich J.-M."/>
            <person name="Beyne E."/>
            <person name="Bleykasten C."/>
            <person name="Boisrame A."/>
            <person name="Boyer J."/>
            <person name="Cattolico L."/>
            <person name="Confanioleri F."/>
            <person name="de Daruvar A."/>
            <person name="Despons L."/>
            <person name="Fabre E."/>
            <person name="Fairhead C."/>
            <person name="Ferry-Dumazet H."/>
            <person name="Groppi A."/>
            <person name="Hantraye F."/>
            <person name="Hennequin C."/>
            <person name="Jauniaux N."/>
            <person name="Joyet P."/>
            <person name="Kachouri R."/>
            <person name="Kerrest A."/>
            <person name="Koszul R."/>
            <person name="Lemaire M."/>
            <person name="Lesur I."/>
            <person name="Ma L."/>
            <person name="Muller H."/>
            <person name="Nicaud J.-M."/>
            <person name="Nikolski M."/>
            <person name="Oztas S."/>
            <person name="Ozier-Kalogeropoulos O."/>
            <person name="Pellenz S."/>
            <person name="Potier S."/>
            <person name="Richard G.-F."/>
            <person name="Straub M.-L."/>
            <person name="Suleau A."/>
            <person name="Swennen D."/>
            <person name="Tekaia F."/>
            <person name="Wesolowski-Louvel M."/>
            <person name="Westhof E."/>
            <person name="Wirth B."/>
            <person name="Zeniou-Meyer M."/>
            <person name="Zivanovic Y."/>
            <person name="Bolotin-Fukuhara M."/>
            <person name="Thierry A."/>
            <person name="Bouchier C."/>
            <person name="Caudron B."/>
            <person name="Scarpelli C."/>
            <person name="Gaillardin C."/>
            <person name="Weissenbach J."/>
            <person name="Wincker P."/>
            <person name="Souciet J.-L."/>
        </authorList>
    </citation>
    <scope>NUCLEOTIDE SEQUENCE [LARGE SCALE GENOMIC DNA]</scope>
    <source>
        <strain>ATCC 2001 / BCRC 20586 / JCM 3761 / NBRC 0622 / NRRL Y-65 / CBS 138</strain>
    </source>
</reference>